<reference key="1">
    <citation type="journal article" date="2008" name="BMC Plant Biol.">
        <title>Complete nucleotide sequence of the Cryptomeria japonica D. Don. chloroplast genome and comparative chloroplast genomics: diversified genomic structure of coniferous species.</title>
        <authorList>
            <person name="Hirao T."/>
            <person name="Watanabe A."/>
            <person name="Kurita M."/>
            <person name="Kondo T."/>
            <person name="Takata K."/>
        </authorList>
    </citation>
    <scope>NUCLEOTIDE SEQUENCE [LARGE SCALE GENOMIC DNA]</scope>
</reference>
<geneLocation type="chloroplast"/>
<evidence type="ECO:0000255" key="1">
    <source>
        <dbReference type="HAMAP-Rule" id="MF_00537"/>
    </source>
</evidence>
<evidence type="ECO:0000305" key="2"/>
<gene>
    <name evidence="1" type="primary">rps14</name>
</gene>
<sequence>MARKSLIQREKKKQRLERKYNLLRQSLKKEMSEVSSLDDKLDIYRKLQSLPRNSAPTRLRRRCLKTGRPRANYRDFELSGYIIREMAHACLLAGVTKSSW</sequence>
<organism>
    <name type="scientific">Cryptomeria japonica</name>
    <name type="common">Japanese cedar</name>
    <name type="synonym">Cupressus japonica</name>
    <dbReference type="NCBI Taxonomy" id="3369"/>
    <lineage>
        <taxon>Eukaryota</taxon>
        <taxon>Viridiplantae</taxon>
        <taxon>Streptophyta</taxon>
        <taxon>Embryophyta</taxon>
        <taxon>Tracheophyta</taxon>
        <taxon>Spermatophyta</taxon>
        <taxon>Pinopsida</taxon>
        <taxon>Pinidae</taxon>
        <taxon>Conifers II</taxon>
        <taxon>Cupressales</taxon>
        <taxon>Cupressaceae</taxon>
        <taxon>Cryptomeria</taxon>
    </lineage>
</organism>
<feature type="chain" id="PRO_0000354410" description="Small ribosomal subunit protein uS14c">
    <location>
        <begin position="1"/>
        <end position="100"/>
    </location>
</feature>
<keyword id="KW-0150">Chloroplast</keyword>
<keyword id="KW-0934">Plastid</keyword>
<keyword id="KW-0687">Ribonucleoprotein</keyword>
<keyword id="KW-0689">Ribosomal protein</keyword>
<keyword id="KW-0694">RNA-binding</keyword>
<keyword id="KW-0699">rRNA-binding</keyword>
<accession>B1VKG7</accession>
<protein>
    <recommendedName>
        <fullName evidence="1">Small ribosomal subunit protein uS14c</fullName>
    </recommendedName>
    <alternativeName>
        <fullName evidence="2">30S ribosomal protein S14, chloroplastic</fullName>
    </alternativeName>
</protein>
<dbReference type="EMBL" id="AP009377">
    <property type="protein sequence ID" value="BAG16678.1"/>
    <property type="molecule type" value="Genomic_DNA"/>
</dbReference>
<dbReference type="RefSeq" id="YP_001806680.1">
    <property type="nucleotide sequence ID" value="NC_010548.1"/>
</dbReference>
<dbReference type="SMR" id="B1VKG7"/>
<dbReference type="GeneID" id="6166602"/>
<dbReference type="KEGG" id="cjf:6166602"/>
<dbReference type="OrthoDB" id="413436at2759"/>
<dbReference type="GO" id="GO:0009507">
    <property type="term" value="C:chloroplast"/>
    <property type="evidence" value="ECO:0007669"/>
    <property type="project" value="UniProtKB-SubCell"/>
</dbReference>
<dbReference type="GO" id="GO:0015935">
    <property type="term" value="C:small ribosomal subunit"/>
    <property type="evidence" value="ECO:0007669"/>
    <property type="project" value="TreeGrafter"/>
</dbReference>
<dbReference type="GO" id="GO:0019843">
    <property type="term" value="F:rRNA binding"/>
    <property type="evidence" value="ECO:0007669"/>
    <property type="project" value="UniProtKB-UniRule"/>
</dbReference>
<dbReference type="GO" id="GO:0003735">
    <property type="term" value="F:structural constituent of ribosome"/>
    <property type="evidence" value="ECO:0007669"/>
    <property type="project" value="InterPro"/>
</dbReference>
<dbReference type="GO" id="GO:0006412">
    <property type="term" value="P:translation"/>
    <property type="evidence" value="ECO:0007669"/>
    <property type="project" value="UniProtKB-UniRule"/>
</dbReference>
<dbReference type="FunFam" id="1.10.287.1480:FF:000001">
    <property type="entry name" value="30S ribosomal protein S14"/>
    <property type="match status" value="1"/>
</dbReference>
<dbReference type="Gene3D" id="1.10.287.1480">
    <property type="match status" value="1"/>
</dbReference>
<dbReference type="HAMAP" id="MF_00537">
    <property type="entry name" value="Ribosomal_uS14_1"/>
    <property type="match status" value="1"/>
</dbReference>
<dbReference type="InterPro" id="IPR001209">
    <property type="entry name" value="Ribosomal_uS14"/>
</dbReference>
<dbReference type="InterPro" id="IPR023036">
    <property type="entry name" value="Ribosomal_uS14_bac/plastid"/>
</dbReference>
<dbReference type="InterPro" id="IPR018271">
    <property type="entry name" value="Ribosomal_uS14_CS"/>
</dbReference>
<dbReference type="NCBIfam" id="NF006477">
    <property type="entry name" value="PRK08881.1"/>
    <property type="match status" value="1"/>
</dbReference>
<dbReference type="PANTHER" id="PTHR19836">
    <property type="entry name" value="30S RIBOSOMAL PROTEIN S14"/>
    <property type="match status" value="1"/>
</dbReference>
<dbReference type="PANTHER" id="PTHR19836:SF19">
    <property type="entry name" value="SMALL RIBOSOMAL SUBUNIT PROTEIN US14M"/>
    <property type="match status" value="1"/>
</dbReference>
<dbReference type="Pfam" id="PF00253">
    <property type="entry name" value="Ribosomal_S14"/>
    <property type="match status" value="1"/>
</dbReference>
<dbReference type="SUPFAM" id="SSF57716">
    <property type="entry name" value="Glucocorticoid receptor-like (DNA-binding domain)"/>
    <property type="match status" value="1"/>
</dbReference>
<dbReference type="PROSITE" id="PS00527">
    <property type="entry name" value="RIBOSOMAL_S14"/>
    <property type="match status" value="1"/>
</dbReference>
<comment type="function">
    <text evidence="1">Binds 16S rRNA, required for the assembly of 30S particles.</text>
</comment>
<comment type="subunit">
    <text evidence="1">Part of the 30S ribosomal subunit.</text>
</comment>
<comment type="subcellular location">
    <subcellularLocation>
        <location>Plastid</location>
        <location>Chloroplast</location>
    </subcellularLocation>
</comment>
<comment type="similarity">
    <text evidence="1">Belongs to the universal ribosomal protein uS14 family.</text>
</comment>
<name>RR14_CRYJA</name>
<proteinExistence type="inferred from homology"/>